<proteinExistence type="inferred from homology"/>
<keyword id="KW-0007">Acetylation</keyword>
<keyword id="KW-0030">Aminoacyl-tRNA synthetase</keyword>
<keyword id="KW-0067">ATP-binding</keyword>
<keyword id="KW-0963">Cytoplasm</keyword>
<keyword id="KW-0436">Ligase</keyword>
<keyword id="KW-0479">Metal-binding</keyword>
<keyword id="KW-0547">Nucleotide-binding</keyword>
<keyword id="KW-0648">Protein biosynthesis</keyword>
<keyword id="KW-0694">RNA-binding</keyword>
<keyword id="KW-0820">tRNA-binding</keyword>
<keyword id="KW-0862">Zinc</keyword>
<name>SYT_ECO8A</name>
<protein>
    <recommendedName>
        <fullName evidence="1">Threonine--tRNA ligase</fullName>
        <ecNumber evidence="1">6.1.1.3</ecNumber>
    </recommendedName>
    <alternativeName>
        <fullName evidence="1">Threonyl-tRNA synthetase</fullName>
        <shortName evidence="1">ThrRS</shortName>
    </alternativeName>
</protein>
<sequence>MPVITLPDGSQRHYDHAVSPMDVALDIGPGLAKACIAGRVNGELVDACDLIENDAQLSIITAKDEDGLEIIRHSCAHLLGHAIKQLWPHTKMAIGPVIDNGFYYDVDLDRTLTQEDVEALEKRMHELAEKNYDVIKKKVSWHEARETFANRGESYKVSILDENIAHDDKPGLYFHEEYVDMCRGPHVPNMRFCHHFKLMKTAGAYWRGDSNNKMLQRIYGTAWADKKALNAYLQRLEEAAKRDHRKIGKQLDLYHMQEEAPGMVFWHNDGWTIFRELEVFVRSKLKEYQYQEVKGPFMMDRVLWEKTGHWDNYKDAMFTTSSENREYCIKPMNCPGHVQIFNQGLKSYRDLPLRMAEFGSCHRNEPSGSLHGLMRVRGFTQDDAHIFCTEEQIRDEVNGCIRLVYDMYSTFGFEKIVVKLSTRPEKRIGSDEMWDRAEADLAVALEENNIPFEYQLGEGAFYGPKIEFTLYDCLDRAWQCGTVQLDFSLPSRLSASYVGEDNERKVPVMIHRAILGSMERFIGILTEEFAGFFPTWLAPVQVVIMNITDSQSEYVNELTQKLSNAGIRVKADLRNEKIGFKIREHTLRRVPYMLVCGDKEVESGKVAVRTRRGKDLGSMDVNEVIEKLQQEIRSRSLKQLEE</sequence>
<comment type="function">
    <text evidence="1">Catalyzes the attachment of threonine to tRNA(Thr) in a two-step reaction: L-threonine is first activated by ATP to form Thr-AMP and then transferred to the acceptor end of tRNA(Thr). Also edits incorrectly charged L-seryl-tRNA(Thr).</text>
</comment>
<comment type="catalytic activity">
    <reaction evidence="1">
        <text>tRNA(Thr) + L-threonine + ATP = L-threonyl-tRNA(Thr) + AMP + diphosphate + H(+)</text>
        <dbReference type="Rhea" id="RHEA:24624"/>
        <dbReference type="Rhea" id="RHEA-COMP:9670"/>
        <dbReference type="Rhea" id="RHEA-COMP:9704"/>
        <dbReference type="ChEBI" id="CHEBI:15378"/>
        <dbReference type="ChEBI" id="CHEBI:30616"/>
        <dbReference type="ChEBI" id="CHEBI:33019"/>
        <dbReference type="ChEBI" id="CHEBI:57926"/>
        <dbReference type="ChEBI" id="CHEBI:78442"/>
        <dbReference type="ChEBI" id="CHEBI:78534"/>
        <dbReference type="ChEBI" id="CHEBI:456215"/>
        <dbReference type="EC" id="6.1.1.3"/>
    </reaction>
</comment>
<comment type="cofactor">
    <cofactor evidence="1">
        <name>Zn(2+)</name>
        <dbReference type="ChEBI" id="CHEBI:29105"/>
    </cofactor>
    <text evidence="1">Binds 1 zinc ion per subunit.</text>
</comment>
<comment type="subunit">
    <text evidence="1">Homodimer.</text>
</comment>
<comment type="subcellular location">
    <subcellularLocation>
        <location evidence="1">Cytoplasm</location>
    </subcellularLocation>
</comment>
<comment type="similarity">
    <text evidence="1">Belongs to the class-II aminoacyl-tRNA synthetase family.</text>
</comment>
<feature type="chain" id="PRO_1000199550" description="Threonine--tRNA ligase">
    <location>
        <begin position="1"/>
        <end position="642"/>
    </location>
</feature>
<feature type="domain" description="TGS" evidence="2">
    <location>
        <begin position="1"/>
        <end position="61"/>
    </location>
</feature>
<feature type="region of interest" description="Catalytic" evidence="1">
    <location>
        <begin position="243"/>
        <end position="534"/>
    </location>
</feature>
<feature type="binding site" evidence="1">
    <location>
        <position position="334"/>
    </location>
    <ligand>
        <name>Zn(2+)</name>
        <dbReference type="ChEBI" id="CHEBI:29105"/>
    </ligand>
</feature>
<feature type="binding site" evidence="1">
    <location>
        <position position="385"/>
    </location>
    <ligand>
        <name>Zn(2+)</name>
        <dbReference type="ChEBI" id="CHEBI:29105"/>
    </ligand>
</feature>
<feature type="binding site" evidence="1">
    <location>
        <position position="511"/>
    </location>
    <ligand>
        <name>Zn(2+)</name>
        <dbReference type="ChEBI" id="CHEBI:29105"/>
    </ligand>
</feature>
<feature type="modified residue" description="N6-acetyllysine" evidence="1">
    <location>
        <position position="286"/>
    </location>
</feature>
<dbReference type="EC" id="6.1.1.3" evidence="1"/>
<dbReference type="EMBL" id="CU928160">
    <property type="protein sequence ID" value="CAQ98632.2"/>
    <property type="molecule type" value="Genomic_DNA"/>
</dbReference>
<dbReference type="RefSeq" id="WP_001144192.1">
    <property type="nucleotide sequence ID" value="NC_011741.1"/>
</dbReference>
<dbReference type="SMR" id="B7M1C7"/>
<dbReference type="KEGG" id="ecr:ECIAI1_1775"/>
<dbReference type="HOGENOM" id="CLU_008554_0_1_6"/>
<dbReference type="GO" id="GO:0005829">
    <property type="term" value="C:cytosol"/>
    <property type="evidence" value="ECO:0007669"/>
    <property type="project" value="TreeGrafter"/>
</dbReference>
<dbReference type="GO" id="GO:0005524">
    <property type="term" value="F:ATP binding"/>
    <property type="evidence" value="ECO:0007669"/>
    <property type="project" value="UniProtKB-UniRule"/>
</dbReference>
<dbReference type="GO" id="GO:0046872">
    <property type="term" value="F:metal ion binding"/>
    <property type="evidence" value="ECO:0007669"/>
    <property type="project" value="UniProtKB-KW"/>
</dbReference>
<dbReference type="GO" id="GO:0004829">
    <property type="term" value="F:threonine-tRNA ligase activity"/>
    <property type="evidence" value="ECO:0007669"/>
    <property type="project" value="UniProtKB-UniRule"/>
</dbReference>
<dbReference type="GO" id="GO:0000049">
    <property type="term" value="F:tRNA binding"/>
    <property type="evidence" value="ECO:0007669"/>
    <property type="project" value="UniProtKB-KW"/>
</dbReference>
<dbReference type="GO" id="GO:0006435">
    <property type="term" value="P:threonyl-tRNA aminoacylation"/>
    <property type="evidence" value="ECO:0007669"/>
    <property type="project" value="UniProtKB-UniRule"/>
</dbReference>
<dbReference type="CDD" id="cd01667">
    <property type="entry name" value="TGS_ThrRS"/>
    <property type="match status" value="1"/>
</dbReference>
<dbReference type="CDD" id="cd00860">
    <property type="entry name" value="ThrRS_anticodon"/>
    <property type="match status" value="1"/>
</dbReference>
<dbReference type="CDD" id="cd00771">
    <property type="entry name" value="ThrRS_core"/>
    <property type="match status" value="1"/>
</dbReference>
<dbReference type="FunFam" id="3.10.20.30:FF:000005">
    <property type="entry name" value="Threonine--tRNA ligase"/>
    <property type="match status" value="1"/>
</dbReference>
<dbReference type="FunFam" id="3.30.54.20:FF:000002">
    <property type="entry name" value="Threonine--tRNA ligase"/>
    <property type="match status" value="1"/>
</dbReference>
<dbReference type="FunFam" id="3.30.930.10:FF:000002">
    <property type="entry name" value="Threonine--tRNA ligase"/>
    <property type="match status" value="1"/>
</dbReference>
<dbReference type="FunFam" id="3.40.50.800:FF:000001">
    <property type="entry name" value="Threonine--tRNA ligase"/>
    <property type="match status" value="1"/>
</dbReference>
<dbReference type="FunFam" id="3.30.980.10:FF:000005">
    <property type="entry name" value="Threonyl-tRNA synthetase, mitochondrial"/>
    <property type="match status" value="1"/>
</dbReference>
<dbReference type="Gene3D" id="3.10.20.30">
    <property type="match status" value="1"/>
</dbReference>
<dbReference type="Gene3D" id="3.30.54.20">
    <property type="match status" value="1"/>
</dbReference>
<dbReference type="Gene3D" id="3.40.50.800">
    <property type="entry name" value="Anticodon-binding domain"/>
    <property type="match status" value="1"/>
</dbReference>
<dbReference type="Gene3D" id="3.30.930.10">
    <property type="entry name" value="Bira Bifunctional Protein, Domain 2"/>
    <property type="match status" value="1"/>
</dbReference>
<dbReference type="Gene3D" id="3.30.980.10">
    <property type="entry name" value="Threonyl-trna Synthetase, Chain A, domain 2"/>
    <property type="match status" value="1"/>
</dbReference>
<dbReference type="HAMAP" id="MF_00184">
    <property type="entry name" value="Thr_tRNA_synth"/>
    <property type="match status" value="1"/>
</dbReference>
<dbReference type="InterPro" id="IPR002314">
    <property type="entry name" value="aa-tRNA-synt_IIb"/>
</dbReference>
<dbReference type="InterPro" id="IPR006195">
    <property type="entry name" value="aa-tRNA-synth_II"/>
</dbReference>
<dbReference type="InterPro" id="IPR045864">
    <property type="entry name" value="aa-tRNA-synth_II/BPL/LPL"/>
</dbReference>
<dbReference type="InterPro" id="IPR004154">
    <property type="entry name" value="Anticodon-bd"/>
</dbReference>
<dbReference type="InterPro" id="IPR036621">
    <property type="entry name" value="Anticodon-bd_dom_sf"/>
</dbReference>
<dbReference type="InterPro" id="IPR012675">
    <property type="entry name" value="Beta-grasp_dom_sf"/>
</dbReference>
<dbReference type="InterPro" id="IPR004095">
    <property type="entry name" value="TGS"/>
</dbReference>
<dbReference type="InterPro" id="IPR012676">
    <property type="entry name" value="TGS-like"/>
</dbReference>
<dbReference type="InterPro" id="IPR002320">
    <property type="entry name" value="Thr-tRNA-ligase_IIa"/>
</dbReference>
<dbReference type="InterPro" id="IPR018163">
    <property type="entry name" value="Thr/Ala-tRNA-synth_IIc_edit"/>
</dbReference>
<dbReference type="InterPro" id="IPR047246">
    <property type="entry name" value="ThrRS_anticodon"/>
</dbReference>
<dbReference type="InterPro" id="IPR033728">
    <property type="entry name" value="ThrRS_core"/>
</dbReference>
<dbReference type="InterPro" id="IPR012947">
    <property type="entry name" value="tRNA_SAD"/>
</dbReference>
<dbReference type="NCBIfam" id="TIGR00418">
    <property type="entry name" value="thrS"/>
    <property type="match status" value="1"/>
</dbReference>
<dbReference type="PANTHER" id="PTHR11451:SF44">
    <property type="entry name" value="THREONINE--TRNA LIGASE, CHLOROPLASTIC_MITOCHONDRIAL 2"/>
    <property type="match status" value="1"/>
</dbReference>
<dbReference type="PANTHER" id="PTHR11451">
    <property type="entry name" value="THREONINE-TRNA LIGASE"/>
    <property type="match status" value="1"/>
</dbReference>
<dbReference type="Pfam" id="PF03129">
    <property type="entry name" value="HGTP_anticodon"/>
    <property type="match status" value="1"/>
</dbReference>
<dbReference type="Pfam" id="PF02824">
    <property type="entry name" value="TGS"/>
    <property type="match status" value="1"/>
</dbReference>
<dbReference type="Pfam" id="PF00587">
    <property type="entry name" value="tRNA-synt_2b"/>
    <property type="match status" value="1"/>
</dbReference>
<dbReference type="Pfam" id="PF07973">
    <property type="entry name" value="tRNA_SAD"/>
    <property type="match status" value="1"/>
</dbReference>
<dbReference type="PRINTS" id="PR01047">
    <property type="entry name" value="TRNASYNTHTHR"/>
</dbReference>
<dbReference type="SMART" id="SM00863">
    <property type="entry name" value="tRNA_SAD"/>
    <property type="match status" value="1"/>
</dbReference>
<dbReference type="SUPFAM" id="SSF52954">
    <property type="entry name" value="Class II aaRS ABD-related"/>
    <property type="match status" value="1"/>
</dbReference>
<dbReference type="SUPFAM" id="SSF55681">
    <property type="entry name" value="Class II aaRS and biotin synthetases"/>
    <property type="match status" value="1"/>
</dbReference>
<dbReference type="SUPFAM" id="SSF81271">
    <property type="entry name" value="TGS-like"/>
    <property type="match status" value="1"/>
</dbReference>
<dbReference type="SUPFAM" id="SSF55186">
    <property type="entry name" value="ThrRS/AlaRS common domain"/>
    <property type="match status" value="1"/>
</dbReference>
<dbReference type="PROSITE" id="PS50862">
    <property type="entry name" value="AA_TRNA_LIGASE_II"/>
    <property type="match status" value="1"/>
</dbReference>
<dbReference type="PROSITE" id="PS51880">
    <property type="entry name" value="TGS"/>
    <property type="match status" value="1"/>
</dbReference>
<reference key="1">
    <citation type="journal article" date="2009" name="PLoS Genet.">
        <title>Organised genome dynamics in the Escherichia coli species results in highly diverse adaptive paths.</title>
        <authorList>
            <person name="Touchon M."/>
            <person name="Hoede C."/>
            <person name="Tenaillon O."/>
            <person name="Barbe V."/>
            <person name="Baeriswyl S."/>
            <person name="Bidet P."/>
            <person name="Bingen E."/>
            <person name="Bonacorsi S."/>
            <person name="Bouchier C."/>
            <person name="Bouvet O."/>
            <person name="Calteau A."/>
            <person name="Chiapello H."/>
            <person name="Clermont O."/>
            <person name="Cruveiller S."/>
            <person name="Danchin A."/>
            <person name="Diard M."/>
            <person name="Dossat C."/>
            <person name="Karoui M.E."/>
            <person name="Frapy E."/>
            <person name="Garry L."/>
            <person name="Ghigo J.M."/>
            <person name="Gilles A.M."/>
            <person name="Johnson J."/>
            <person name="Le Bouguenec C."/>
            <person name="Lescat M."/>
            <person name="Mangenot S."/>
            <person name="Martinez-Jehanne V."/>
            <person name="Matic I."/>
            <person name="Nassif X."/>
            <person name="Oztas S."/>
            <person name="Petit M.A."/>
            <person name="Pichon C."/>
            <person name="Rouy Z."/>
            <person name="Ruf C.S."/>
            <person name="Schneider D."/>
            <person name="Tourret J."/>
            <person name="Vacherie B."/>
            <person name="Vallenet D."/>
            <person name="Medigue C."/>
            <person name="Rocha E.P.C."/>
            <person name="Denamur E."/>
        </authorList>
    </citation>
    <scope>NUCLEOTIDE SEQUENCE [LARGE SCALE GENOMIC DNA]</scope>
    <source>
        <strain>IAI1</strain>
    </source>
</reference>
<gene>
    <name evidence="1" type="primary">thrS</name>
    <name type="ordered locus">ECIAI1_1775</name>
</gene>
<organism>
    <name type="scientific">Escherichia coli O8 (strain IAI1)</name>
    <dbReference type="NCBI Taxonomy" id="585034"/>
    <lineage>
        <taxon>Bacteria</taxon>
        <taxon>Pseudomonadati</taxon>
        <taxon>Pseudomonadota</taxon>
        <taxon>Gammaproteobacteria</taxon>
        <taxon>Enterobacterales</taxon>
        <taxon>Enterobacteriaceae</taxon>
        <taxon>Escherichia</taxon>
    </lineage>
</organism>
<evidence type="ECO:0000255" key="1">
    <source>
        <dbReference type="HAMAP-Rule" id="MF_00184"/>
    </source>
</evidence>
<evidence type="ECO:0000255" key="2">
    <source>
        <dbReference type="PROSITE-ProRule" id="PRU01228"/>
    </source>
</evidence>
<accession>B7M1C7</accession>